<accession>Q53B56</accession>
<dbReference type="EMBL" id="AY596930">
    <property type="protein sequence ID" value="AAT97252.1"/>
    <property type="molecule type" value="mRNA"/>
</dbReference>
<dbReference type="SMR" id="Q53B56"/>
<dbReference type="TopDownProteomics" id="Q53B56"/>
<dbReference type="GO" id="GO:0005576">
    <property type="term" value="C:extracellular region"/>
    <property type="evidence" value="ECO:0007669"/>
    <property type="project" value="UniProtKB-SubCell"/>
</dbReference>
<dbReference type="GO" id="GO:0030550">
    <property type="term" value="F:acetylcholine receptor inhibitor activity"/>
    <property type="evidence" value="ECO:0007669"/>
    <property type="project" value="UniProtKB-KW"/>
</dbReference>
<dbReference type="GO" id="GO:0099106">
    <property type="term" value="F:ion channel regulator activity"/>
    <property type="evidence" value="ECO:0007669"/>
    <property type="project" value="UniProtKB-KW"/>
</dbReference>
<dbReference type="GO" id="GO:0090729">
    <property type="term" value="F:toxin activity"/>
    <property type="evidence" value="ECO:0007669"/>
    <property type="project" value="UniProtKB-KW"/>
</dbReference>
<dbReference type="CDD" id="cd00206">
    <property type="entry name" value="TFP_snake_toxin"/>
    <property type="match status" value="1"/>
</dbReference>
<dbReference type="Gene3D" id="2.10.60.10">
    <property type="entry name" value="CD59"/>
    <property type="match status" value="1"/>
</dbReference>
<dbReference type="InterPro" id="IPR003571">
    <property type="entry name" value="Snake_3FTx"/>
</dbReference>
<dbReference type="InterPro" id="IPR045860">
    <property type="entry name" value="Snake_toxin-like_sf"/>
</dbReference>
<dbReference type="InterPro" id="IPR018354">
    <property type="entry name" value="Snake_toxin_con_site"/>
</dbReference>
<dbReference type="InterPro" id="IPR054131">
    <property type="entry name" value="Toxin_cobra-type"/>
</dbReference>
<dbReference type="Pfam" id="PF21947">
    <property type="entry name" value="Toxin_cobra-type"/>
    <property type="match status" value="1"/>
</dbReference>
<dbReference type="SUPFAM" id="SSF57302">
    <property type="entry name" value="Snake toxin-like"/>
    <property type="match status" value="1"/>
</dbReference>
<dbReference type="PROSITE" id="PS00272">
    <property type="entry name" value="SNAKE_TOXIN"/>
    <property type="match status" value="1"/>
</dbReference>
<keyword id="KW-0008">Acetylcholine receptor inhibiting toxin</keyword>
<keyword id="KW-1015">Disulfide bond</keyword>
<keyword id="KW-0872">Ion channel impairing toxin</keyword>
<keyword id="KW-0528">Neurotoxin</keyword>
<keyword id="KW-0629">Postsynaptic neurotoxin</keyword>
<keyword id="KW-0964">Secreted</keyword>
<keyword id="KW-0732">Signal</keyword>
<keyword id="KW-0800">Toxin</keyword>
<reference key="1">
    <citation type="journal article" date="2004" name="Toxicon">
        <title>Cloning and purification of alpha-neurotoxins from king cobra (Ophiophagus hannah).</title>
        <authorList>
            <person name="He Y.-Y."/>
            <person name="Lee W.-H."/>
            <person name="Zhang Y."/>
        </authorList>
    </citation>
    <scope>NUCLEOTIDE SEQUENCE [MRNA]</scope>
    <source>
        <tissue>Venom gland</tissue>
    </source>
</reference>
<organism>
    <name type="scientific">Ophiophagus hannah</name>
    <name type="common">King cobra</name>
    <name type="synonym">Naja hannah</name>
    <dbReference type="NCBI Taxonomy" id="8665"/>
    <lineage>
        <taxon>Eukaryota</taxon>
        <taxon>Metazoa</taxon>
        <taxon>Chordata</taxon>
        <taxon>Craniata</taxon>
        <taxon>Vertebrata</taxon>
        <taxon>Euteleostomi</taxon>
        <taxon>Lepidosauria</taxon>
        <taxon>Squamata</taxon>
        <taxon>Bifurcata</taxon>
        <taxon>Unidentata</taxon>
        <taxon>Episquamata</taxon>
        <taxon>Toxicofera</taxon>
        <taxon>Serpentes</taxon>
        <taxon>Colubroidea</taxon>
        <taxon>Elapidae</taxon>
        <taxon>Elapinae</taxon>
        <taxon>Ophiophagus</taxon>
    </lineage>
</organism>
<comment type="function">
    <text evidence="2">Binds with high affinity to muscular (alpha-1/CHRNA1) and neuronal (alpha-7/CHRNA7) nicotinic acetylcholine receptor (nAChR) and inhibits acetylcholine from binding to the receptor, thereby impairing neuromuscular and neuronal transmission.</text>
</comment>
<comment type="subcellular location">
    <subcellularLocation>
        <location evidence="1">Secreted</location>
    </subcellularLocation>
</comment>
<comment type="tissue specificity">
    <text evidence="3">Expressed by the venom gland.</text>
</comment>
<comment type="similarity">
    <text evidence="3">Belongs to the three-finger toxin family. Long-chain subfamily. Type II alpha-neurotoxin sub-subfamily.</text>
</comment>
<proteinExistence type="inferred from homology"/>
<name>3L257_OPHHA</name>
<feature type="signal peptide" evidence="1">
    <location>
        <begin position="1"/>
        <end position="21"/>
    </location>
</feature>
<feature type="chain" id="PRO_5000093323" description="Long neurotoxin OH-57">
    <location>
        <begin position="22"/>
        <end position="91"/>
    </location>
</feature>
<feature type="disulfide bond" evidence="1">
    <location>
        <begin position="24"/>
        <end position="41"/>
    </location>
</feature>
<feature type="disulfide bond" evidence="1">
    <location>
        <begin position="34"/>
        <end position="62"/>
    </location>
</feature>
<feature type="disulfide bond" evidence="1">
    <location>
        <begin position="47"/>
        <end position="51"/>
    </location>
</feature>
<feature type="disulfide bond" evidence="1">
    <location>
        <begin position="66"/>
        <end position="77"/>
    </location>
</feature>
<feature type="disulfide bond" evidence="1">
    <location>
        <begin position="78"/>
        <end position="83"/>
    </location>
</feature>
<protein>
    <recommendedName>
        <fullName>Long neurotoxin OH-57</fullName>
    </recommendedName>
</protein>
<evidence type="ECO:0000250" key="1"/>
<evidence type="ECO:0000250" key="2">
    <source>
        <dbReference type="UniProtKB" id="P60615"/>
    </source>
</evidence>
<evidence type="ECO:0000305" key="3"/>
<sequence>MKTLLLTLVVVTIVCLDLGYTRICHKSSFISETCPDGQNLCYLKSWCDIFCGSRGERLEFGCAATCPEVKPGVNIECCSTDNCNPHPKLRP</sequence>